<sequence length="370" mass="40473">MEATKQVVNFGPGPAKLPHSVLLEIQKQLLDYRGLGISVLEMSHRSSDFAKIIGNTENLVRELLAVPNNYKVIFVQGGGSGQFSAVPLNLIGLKAGRSADYVVTGAWSAKAAEEAKKFGTVNIVHPKLGSYTKIPDPSTWNLNPDASYVYFCANETVHGVEFDFVPDVKGAVLVCDMSSNFLSRPVDVSKFGVIFAGAQKNVGSAGVTVVIVRDDLLGFSLRECPSVLDYKVQAGNNSLYNTPPCFSIYVMGMVLEWIKNNGGAAAMEKLSSIKSQMIYEIIDNSQGFYVCPVERQNRSRMNIPFRIGNAKGDEALEKRFLDKAVELNMISLKGHRSVGGIRASLYNAVTTEDVEKLAAFMKNFLEMHQL</sequence>
<reference key="1">
    <citation type="submission" date="2000-04" db="EMBL/GenBank/DDBJ databases">
        <authorList>
            <person name="Sato M."/>
            <person name="Oguma T."/>
            <person name="Tsujimoto K."/>
            <person name="Tadakuma T."/>
        </authorList>
    </citation>
    <scope>NUCLEOTIDE SEQUENCE [MRNA]</scope>
    <source>
        <strain>BALB/cJ</strain>
    </source>
</reference>
<reference key="2">
    <citation type="journal article" date="2004" name="Genome Res.">
        <title>The status, quality, and expansion of the NIH full-length cDNA project: the Mammalian Gene Collection (MGC).</title>
        <authorList>
            <consortium name="The MGC Project Team"/>
        </authorList>
    </citation>
    <scope>NUCLEOTIDE SEQUENCE [LARGE SCALE MRNA]</scope>
</reference>
<reference key="3">
    <citation type="submission" date="2009-01" db="UniProtKB">
        <authorList>
            <person name="Lubec G."/>
            <person name="Kang S.U."/>
            <person name="Sunyer B."/>
            <person name="Chen W.-Q."/>
        </authorList>
    </citation>
    <scope>PROTEIN SEQUENCE OF 17-27; 52-94; 191-200; 223-231 AND 343-356</scope>
    <scope>IDENTIFICATION BY MASS SPECTROMETRY</scope>
    <source>
        <strain>C57BL/6J</strain>
        <strain>OF1</strain>
        <tissue>Brain</tissue>
        <tissue>Hippocampus</tissue>
    </source>
</reference>
<reference key="4">
    <citation type="journal article" date="2010" name="Cell">
        <title>A tissue-specific atlas of mouse protein phosphorylation and expression.</title>
        <authorList>
            <person name="Huttlin E.L."/>
            <person name="Jedrychowski M.P."/>
            <person name="Elias J.E."/>
            <person name="Goswami T."/>
            <person name="Rad R."/>
            <person name="Beausoleil S.A."/>
            <person name="Villen J."/>
            <person name="Haas W."/>
            <person name="Sowa M.E."/>
            <person name="Gygi S.P."/>
        </authorList>
    </citation>
    <scope>IDENTIFICATION BY MASS SPECTROMETRY [LARGE SCALE ANALYSIS]</scope>
    <source>
        <tissue>Brain</tissue>
        <tissue>Heart</tissue>
        <tissue>Kidney</tissue>
        <tissue>Lung</tissue>
        <tissue>Pancreas</tissue>
        <tissue>Spleen</tissue>
        <tissue>Testis</tissue>
    </source>
</reference>
<reference key="5">
    <citation type="journal article" date="2013" name="Mol. Cell">
        <title>SIRT5-mediated lysine desuccinylation impacts diverse metabolic pathways.</title>
        <authorList>
            <person name="Park J."/>
            <person name="Chen Y."/>
            <person name="Tishkoff D.X."/>
            <person name="Peng C."/>
            <person name="Tan M."/>
            <person name="Dai L."/>
            <person name="Xie Z."/>
            <person name="Zhang Y."/>
            <person name="Zwaans B.M."/>
            <person name="Skinner M.E."/>
            <person name="Lombard D.B."/>
            <person name="Zhao Y."/>
        </authorList>
    </citation>
    <scope>ACETYLATION [LARGE SCALE ANALYSIS] AT LYS-127</scope>
    <scope>IDENTIFICATION BY MASS SPECTROMETRY [LARGE SCALE ANALYSIS]</scope>
    <source>
        <tissue>Embryonic fibroblast</tissue>
    </source>
</reference>
<proteinExistence type="evidence at protein level"/>
<comment type="function">
    <text evidence="1">Involved in L-serine biosynthesis via the phosphorylated pathway, a three-step pathway converting the glycolytic intermediate 3-phospho-D-glycerate into L-serine. Catalyzes the second step, that is the pyridoxal 5'-phosphate-dependent transamination of 3-phosphohydroxypyruvate and L-glutamate to O-phosphoserine (OPS) and alpha-ketoglutarate.</text>
</comment>
<comment type="catalytic activity">
    <reaction evidence="1">
        <text>O-phospho-L-serine + 2-oxoglutarate = 3-phosphooxypyruvate + L-glutamate</text>
        <dbReference type="Rhea" id="RHEA:14329"/>
        <dbReference type="ChEBI" id="CHEBI:16810"/>
        <dbReference type="ChEBI" id="CHEBI:18110"/>
        <dbReference type="ChEBI" id="CHEBI:29985"/>
        <dbReference type="ChEBI" id="CHEBI:57524"/>
        <dbReference type="EC" id="2.6.1.52"/>
    </reaction>
</comment>
<comment type="cofactor">
    <cofactor evidence="1">
        <name>pyridoxal 5'-phosphate</name>
        <dbReference type="ChEBI" id="CHEBI:597326"/>
    </cofactor>
    <text evidence="1">Binds 2 pyridoxal phosphate molecules per dimer, each cofactor is bound at the monomer-monomer interface and forms contacts with residues from both chains.</text>
</comment>
<comment type="pathway">
    <text evidence="1">Amino-acid biosynthesis; L-serine biosynthesis; L-serine from 3-phospho-D-glycerate: step 2/3.</text>
</comment>
<comment type="subunit">
    <text evidence="1">Homodimer.</text>
</comment>
<comment type="similarity">
    <text evidence="2">Belongs to the class-V pyridoxal-phosphate-dependent aminotransferase family. SerC subfamily.</text>
</comment>
<dbReference type="EC" id="2.6.1.52" evidence="1"/>
<dbReference type="EMBL" id="AF259674">
    <property type="protein sequence ID" value="AAK69389.1"/>
    <property type="molecule type" value="mRNA"/>
</dbReference>
<dbReference type="EMBL" id="BC004827">
    <property type="protein sequence ID" value="AAH04827.1"/>
    <property type="molecule type" value="mRNA"/>
</dbReference>
<dbReference type="CCDS" id="CCDS29681.1"/>
<dbReference type="RefSeq" id="NP_803155.1">
    <property type="nucleotide sequence ID" value="NM_177420.2"/>
</dbReference>
<dbReference type="SMR" id="Q99K85"/>
<dbReference type="BioGRID" id="223231">
    <property type="interactions" value="15"/>
</dbReference>
<dbReference type="FunCoup" id="Q99K85">
    <property type="interactions" value="1417"/>
</dbReference>
<dbReference type="IntAct" id="Q99K85">
    <property type="interactions" value="2"/>
</dbReference>
<dbReference type="STRING" id="10090.ENSMUSP00000025542"/>
<dbReference type="iPTMnet" id="Q99K85"/>
<dbReference type="PhosphoSitePlus" id="Q99K85"/>
<dbReference type="SwissPalm" id="Q99K85"/>
<dbReference type="jPOST" id="Q99K85"/>
<dbReference type="PaxDb" id="10090-ENSMUSP00000025542"/>
<dbReference type="ProteomicsDB" id="255390"/>
<dbReference type="Pumba" id="Q99K85"/>
<dbReference type="Antibodypedia" id="27405">
    <property type="antibodies" value="252 antibodies from 31 providers"/>
</dbReference>
<dbReference type="DNASU" id="107272"/>
<dbReference type="Ensembl" id="ENSMUST00000025542.10">
    <property type="protein sequence ID" value="ENSMUSP00000025542.4"/>
    <property type="gene ID" value="ENSMUSG00000024640.10"/>
</dbReference>
<dbReference type="GeneID" id="107272"/>
<dbReference type="KEGG" id="mmu:107272"/>
<dbReference type="UCSC" id="uc008gwp.2">
    <property type="organism name" value="mouse"/>
</dbReference>
<dbReference type="AGR" id="MGI:2183441"/>
<dbReference type="CTD" id="29968"/>
<dbReference type="MGI" id="MGI:2183441">
    <property type="gene designation" value="Psat1"/>
</dbReference>
<dbReference type="VEuPathDB" id="HostDB:ENSMUSG00000024640"/>
<dbReference type="eggNOG" id="KOG2790">
    <property type="taxonomic scope" value="Eukaryota"/>
</dbReference>
<dbReference type="GeneTree" id="ENSGT00940000153241"/>
<dbReference type="HOGENOM" id="CLU_034866_0_1_1"/>
<dbReference type="InParanoid" id="Q99K85"/>
<dbReference type="OMA" id="AFVYFCD"/>
<dbReference type="OrthoDB" id="1703350at2759"/>
<dbReference type="PhylomeDB" id="Q99K85"/>
<dbReference type="TreeFam" id="TF312975"/>
<dbReference type="Reactome" id="R-MMU-977347">
    <property type="pathway name" value="Serine biosynthesis"/>
</dbReference>
<dbReference type="UniPathway" id="UPA00135">
    <property type="reaction ID" value="UER00197"/>
</dbReference>
<dbReference type="BioGRID-ORCS" id="107272">
    <property type="hits" value="6 hits in 82 CRISPR screens"/>
</dbReference>
<dbReference type="ChiTaRS" id="Psat1">
    <property type="organism name" value="mouse"/>
</dbReference>
<dbReference type="PRO" id="PR:Q99K85"/>
<dbReference type="Proteomes" id="UP000000589">
    <property type="component" value="Chromosome 19"/>
</dbReference>
<dbReference type="RNAct" id="Q99K85">
    <property type="molecule type" value="protein"/>
</dbReference>
<dbReference type="Bgee" id="ENSMUSG00000024640">
    <property type="expression patterns" value="Expressed in vestibular epithelium and 278 other cell types or tissues"/>
</dbReference>
<dbReference type="ExpressionAtlas" id="Q99K85">
    <property type="expression patterns" value="baseline and differential"/>
</dbReference>
<dbReference type="GO" id="GO:0005829">
    <property type="term" value="C:cytosol"/>
    <property type="evidence" value="ECO:0007669"/>
    <property type="project" value="Ensembl"/>
</dbReference>
<dbReference type="GO" id="GO:0042802">
    <property type="term" value="F:identical protein binding"/>
    <property type="evidence" value="ECO:0007669"/>
    <property type="project" value="Ensembl"/>
</dbReference>
<dbReference type="GO" id="GO:0004648">
    <property type="term" value="F:O-phospho-L-serine:2-oxoglutarate aminotransferase activity"/>
    <property type="evidence" value="ECO:0000250"/>
    <property type="project" value="UniProtKB"/>
</dbReference>
<dbReference type="GO" id="GO:0006564">
    <property type="term" value="P:L-serine biosynthetic process"/>
    <property type="evidence" value="ECO:0000250"/>
    <property type="project" value="UniProtKB"/>
</dbReference>
<dbReference type="CDD" id="cd00611">
    <property type="entry name" value="PSAT_like"/>
    <property type="match status" value="1"/>
</dbReference>
<dbReference type="FunFam" id="3.40.640.10:FF:000010">
    <property type="entry name" value="Phosphoserine aminotransferase"/>
    <property type="match status" value="1"/>
</dbReference>
<dbReference type="FunFam" id="3.90.1150.10:FF:000121">
    <property type="entry name" value="Phosphoserine aminotransferase"/>
    <property type="match status" value="1"/>
</dbReference>
<dbReference type="Gene3D" id="3.90.1150.10">
    <property type="entry name" value="Aspartate Aminotransferase, domain 1"/>
    <property type="match status" value="1"/>
</dbReference>
<dbReference type="Gene3D" id="3.40.640.10">
    <property type="entry name" value="Type I PLP-dependent aspartate aminotransferase-like (Major domain)"/>
    <property type="match status" value="1"/>
</dbReference>
<dbReference type="HAMAP" id="MF_00160">
    <property type="entry name" value="SerC_aminotrans_5"/>
    <property type="match status" value="1"/>
</dbReference>
<dbReference type="InterPro" id="IPR000192">
    <property type="entry name" value="Aminotrans_V_dom"/>
</dbReference>
<dbReference type="InterPro" id="IPR020578">
    <property type="entry name" value="Aminotrans_V_PyrdxlP_BS"/>
</dbReference>
<dbReference type="InterPro" id="IPR022278">
    <property type="entry name" value="Pser_aminoTfrase"/>
</dbReference>
<dbReference type="InterPro" id="IPR015424">
    <property type="entry name" value="PyrdxlP-dep_Trfase"/>
</dbReference>
<dbReference type="InterPro" id="IPR015421">
    <property type="entry name" value="PyrdxlP-dep_Trfase_major"/>
</dbReference>
<dbReference type="InterPro" id="IPR015422">
    <property type="entry name" value="PyrdxlP-dep_Trfase_small"/>
</dbReference>
<dbReference type="NCBIfam" id="NF003764">
    <property type="entry name" value="PRK05355.1"/>
    <property type="match status" value="1"/>
</dbReference>
<dbReference type="NCBIfam" id="TIGR01364">
    <property type="entry name" value="serC_1"/>
    <property type="match status" value="1"/>
</dbReference>
<dbReference type="PANTHER" id="PTHR43247">
    <property type="entry name" value="PHOSPHOSERINE AMINOTRANSFERASE"/>
    <property type="match status" value="1"/>
</dbReference>
<dbReference type="PANTHER" id="PTHR43247:SF1">
    <property type="entry name" value="PHOSPHOSERINE AMINOTRANSFERASE"/>
    <property type="match status" value="1"/>
</dbReference>
<dbReference type="Pfam" id="PF00266">
    <property type="entry name" value="Aminotran_5"/>
    <property type="match status" value="1"/>
</dbReference>
<dbReference type="PIRSF" id="PIRSF000525">
    <property type="entry name" value="SerC"/>
    <property type="match status" value="1"/>
</dbReference>
<dbReference type="SUPFAM" id="SSF53383">
    <property type="entry name" value="PLP-dependent transferases"/>
    <property type="match status" value="1"/>
</dbReference>
<dbReference type="PROSITE" id="PS00595">
    <property type="entry name" value="AA_TRANSFER_CLASS_5"/>
    <property type="match status" value="1"/>
</dbReference>
<evidence type="ECO:0000250" key="1">
    <source>
        <dbReference type="UniProtKB" id="Q9Y617"/>
    </source>
</evidence>
<evidence type="ECO:0000305" key="2"/>
<evidence type="ECO:0000312" key="3">
    <source>
        <dbReference type="MGI" id="MGI:2183441"/>
    </source>
</evidence>
<evidence type="ECO:0007744" key="4">
    <source>
    </source>
</evidence>
<gene>
    <name evidence="3" type="primary">Psat1</name>
    <name type="synonym">Psa</name>
    <name type="synonym">Psat</name>
</gene>
<keyword id="KW-0007">Acetylation</keyword>
<keyword id="KW-0028">Amino-acid biosynthesis</keyword>
<keyword id="KW-0032">Aminotransferase</keyword>
<keyword id="KW-0903">Direct protein sequencing</keyword>
<keyword id="KW-0597">Phosphoprotein</keyword>
<keyword id="KW-0663">Pyridoxal phosphate</keyword>
<keyword id="KW-1185">Reference proteome</keyword>
<keyword id="KW-0718">Serine biosynthesis</keyword>
<keyword id="KW-0808">Transferase</keyword>
<feature type="chain" id="PRO_0000150136" description="Phosphoserine aminotransferase">
    <location>
        <begin position="1"/>
        <end position="370"/>
    </location>
</feature>
<feature type="binding site" description="in other chain" evidence="1">
    <location>
        <position position="44"/>
    </location>
    <ligand>
        <name>O-phospho-L-serine</name>
        <dbReference type="ChEBI" id="CHEBI:57524"/>
        <note>ligand shared between homodimeric partners</note>
    </ligand>
</feature>
<feature type="binding site" description="in other chain" evidence="1">
    <location>
        <position position="45"/>
    </location>
    <ligand>
        <name>O-phospho-L-serine</name>
        <dbReference type="ChEBI" id="CHEBI:57524"/>
        <note>ligand shared between homodimeric partners</note>
    </ligand>
</feature>
<feature type="binding site" evidence="1">
    <location>
        <position position="79"/>
    </location>
    <ligand>
        <name>pyridoxal 5'-phosphate</name>
        <dbReference type="ChEBI" id="CHEBI:597326"/>
        <note>ligand shared between homodimeric partners</note>
    </ligand>
</feature>
<feature type="binding site" evidence="1">
    <location>
        <position position="107"/>
    </location>
    <ligand>
        <name>pyridoxal 5'-phosphate</name>
        <dbReference type="ChEBI" id="CHEBI:597326"/>
        <note>ligand shared between homodimeric partners</note>
    </ligand>
</feature>
<feature type="binding site" evidence="1">
    <location>
        <position position="156"/>
    </location>
    <ligand>
        <name>pyridoxal 5'-phosphate</name>
        <dbReference type="ChEBI" id="CHEBI:597326"/>
        <note>ligand shared between homodimeric partners</note>
    </ligand>
</feature>
<feature type="binding site" evidence="1">
    <location>
        <position position="176"/>
    </location>
    <ligand>
        <name>pyridoxal 5'-phosphate</name>
        <dbReference type="ChEBI" id="CHEBI:597326"/>
        <note>ligand shared between homodimeric partners</note>
    </ligand>
</feature>
<feature type="binding site" evidence="1">
    <location>
        <position position="199"/>
    </location>
    <ligand>
        <name>pyridoxal 5'-phosphate</name>
        <dbReference type="ChEBI" id="CHEBI:597326"/>
        <note>ligand shared between homodimeric partners</note>
    </ligand>
</feature>
<feature type="binding site" description="in other chain" evidence="1">
    <location>
        <position position="241"/>
    </location>
    <ligand>
        <name>pyridoxal 5'-phosphate</name>
        <dbReference type="ChEBI" id="CHEBI:597326"/>
        <note>ligand shared between homodimeric partners</note>
    </ligand>
</feature>
<feature type="binding site" description="in other chain" evidence="1">
    <location>
        <position position="242"/>
    </location>
    <ligand>
        <name>pyridoxal 5'-phosphate</name>
        <dbReference type="ChEBI" id="CHEBI:597326"/>
        <note>ligand shared between homodimeric partners</note>
    </ligand>
</feature>
<feature type="binding site" evidence="1">
    <location>
        <position position="335"/>
    </location>
    <ligand>
        <name>O-phospho-L-serine</name>
        <dbReference type="ChEBI" id="CHEBI:57524"/>
        <note>ligand shared between homodimeric partners</note>
    </ligand>
</feature>
<feature type="binding site" evidence="1">
    <location>
        <position position="336"/>
    </location>
    <ligand>
        <name>O-phospho-L-serine</name>
        <dbReference type="ChEBI" id="CHEBI:57524"/>
        <note>ligand shared between homodimeric partners</note>
    </ligand>
</feature>
<feature type="binding site" evidence="1">
    <location>
        <position position="342"/>
    </location>
    <ligand>
        <name>O-phospho-L-serine</name>
        <dbReference type="ChEBI" id="CHEBI:57524"/>
        <note>ligand shared between homodimeric partners</note>
    </ligand>
</feature>
<feature type="modified residue" description="N-acetylmethionine" evidence="1">
    <location>
        <position position="1"/>
    </location>
</feature>
<feature type="modified residue" description="N6-acetyllysine" evidence="1">
    <location>
        <position position="51"/>
    </location>
</feature>
<feature type="modified residue" description="N6-acetyllysine" evidence="4">
    <location>
        <position position="127"/>
    </location>
</feature>
<feature type="modified residue" description="N6-(pyridoxal phosphate)lysine" evidence="1">
    <location>
        <position position="200"/>
    </location>
</feature>
<feature type="modified residue" description="N6-acetyllysine" evidence="1">
    <location>
        <position position="269"/>
    </location>
</feature>
<feature type="modified residue" description="N6-acetyllysine" evidence="1">
    <location>
        <position position="318"/>
    </location>
</feature>
<feature type="modified residue" description="N6-acetyllysine" evidence="1">
    <location>
        <position position="323"/>
    </location>
</feature>
<feature type="modified residue" description="Phosphoserine" evidence="1">
    <location>
        <position position="331"/>
    </location>
</feature>
<feature type="modified residue" description="N6-acetyllysine" evidence="1">
    <location>
        <position position="333"/>
    </location>
</feature>
<name>SERC_MOUSE</name>
<protein>
    <recommendedName>
        <fullName evidence="2">Phosphoserine aminotransferase</fullName>
        <shortName>PSAT</shortName>
        <ecNumber evidence="1">2.6.1.52</ecNumber>
    </recommendedName>
    <alternativeName>
        <fullName>Endometrial progesterone-induced protein</fullName>
        <shortName>EPIP</shortName>
    </alternativeName>
    <alternativeName>
        <fullName>Phosphohydroxythreonine aminotransferase</fullName>
    </alternativeName>
</protein>
<organism>
    <name type="scientific">Mus musculus</name>
    <name type="common">Mouse</name>
    <dbReference type="NCBI Taxonomy" id="10090"/>
    <lineage>
        <taxon>Eukaryota</taxon>
        <taxon>Metazoa</taxon>
        <taxon>Chordata</taxon>
        <taxon>Craniata</taxon>
        <taxon>Vertebrata</taxon>
        <taxon>Euteleostomi</taxon>
        <taxon>Mammalia</taxon>
        <taxon>Eutheria</taxon>
        <taxon>Euarchontoglires</taxon>
        <taxon>Glires</taxon>
        <taxon>Rodentia</taxon>
        <taxon>Myomorpha</taxon>
        <taxon>Muroidea</taxon>
        <taxon>Muridae</taxon>
        <taxon>Murinae</taxon>
        <taxon>Mus</taxon>
        <taxon>Mus</taxon>
    </lineage>
</organism>
<accession>Q99K85</accession>